<gene>
    <name evidence="1" type="primary">clpS</name>
    <name type="ordered locus">YPN_2613</name>
    <name type="ORF">YP516_2946</name>
</gene>
<evidence type="ECO:0000255" key="1">
    <source>
        <dbReference type="HAMAP-Rule" id="MF_00302"/>
    </source>
</evidence>
<accession>Q1CGD9</accession>
<accession>C4GVW0</accession>
<dbReference type="EMBL" id="CP000305">
    <property type="protein sequence ID" value="ABG18941.1"/>
    <property type="molecule type" value="Genomic_DNA"/>
</dbReference>
<dbReference type="EMBL" id="ACNQ01000017">
    <property type="protein sequence ID" value="EEO75060.1"/>
    <property type="molecule type" value="Genomic_DNA"/>
</dbReference>
<dbReference type="RefSeq" id="WP_002211349.1">
    <property type="nucleotide sequence ID" value="NZ_ACNQ01000017.1"/>
</dbReference>
<dbReference type="SMR" id="Q1CGD9"/>
<dbReference type="GeneID" id="96664964"/>
<dbReference type="KEGG" id="ypn:YPN_2613"/>
<dbReference type="HOGENOM" id="CLU_134358_2_1_6"/>
<dbReference type="Proteomes" id="UP000008936">
    <property type="component" value="Chromosome"/>
</dbReference>
<dbReference type="GO" id="GO:0030163">
    <property type="term" value="P:protein catabolic process"/>
    <property type="evidence" value="ECO:0007669"/>
    <property type="project" value="InterPro"/>
</dbReference>
<dbReference type="GO" id="GO:0006508">
    <property type="term" value="P:proteolysis"/>
    <property type="evidence" value="ECO:0007669"/>
    <property type="project" value="UniProtKB-UniRule"/>
</dbReference>
<dbReference type="FunFam" id="3.30.1390.10:FF:000002">
    <property type="entry name" value="ATP-dependent Clp protease adapter protein ClpS"/>
    <property type="match status" value="1"/>
</dbReference>
<dbReference type="Gene3D" id="3.30.1390.10">
    <property type="match status" value="1"/>
</dbReference>
<dbReference type="HAMAP" id="MF_00302">
    <property type="entry name" value="ClpS"/>
    <property type="match status" value="1"/>
</dbReference>
<dbReference type="InterPro" id="IPR022935">
    <property type="entry name" value="ClpS"/>
</dbReference>
<dbReference type="InterPro" id="IPR003769">
    <property type="entry name" value="ClpS_core"/>
</dbReference>
<dbReference type="InterPro" id="IPR014719">
    <property type="entry name" value="Ribosomal_bL12_C/ClpS-like"/>
</dbReference>
<dbReference type="NCBIfam" id="NF000670">
    <property type="entry name" value="PRK00033.1-3"/>
    <property type="match status" value="1"/>
</dbReference>
<dbReference type="NCBIfam" id="NF000672">
    <property type="entry name" value="PRK00033.1-5"/>
    <property type="match status" value="1"/>
</dbReference>
<dbReference type="PANTHER" id="PTHR33473:SF19">
    <property type="entry name" value="ATP-DEPENDENT CLP PROTEASE ADAPTER PROTEIN CLPS"/>
    <property type="match status" value="1"/>
</dbReference>
<dbReference type="PANTHER" id="PTHR33473">
    <property type="entry name" value="ATP-DEPENDENT CLP PROTEASE ADAPTER PROTEIN CLPS1, CHLOROPLASTIC"/>
    <property type="match status" value="1"/>
</dbReference>
<dbReference type="Pfam" id="PF02617">
    <property type="entry name" value="ClpS"/>
    <property type="match status" value="1"/>
</dbReference>
<dbReference type="SUPFAM" id="SSF54736">
    <property type="entry name" value="ClpS-like"/>
    <property type="match status" value="1"/>
</dbReference>
<proteinExistence type="inferred from homology"/>
<name>CLPS_YERPN</name>
<comment type="function">
    <text evidence="1">Involved in the modulation of the specificity of the ClpAP-mediated ATP-dependent protein degradation.</text>
</comment>
<comment type="subunit">
    <text evidence="1">Binds to the N-terminal domain of the chaperone ClpA.</text>
</comment>
<comment type="similarity">
    <text evidence="1">Belongs to the ClpS family.</text>
</comment>
<reference key="1">
    <citation type="journal article" date="2006" name="J. Bacteriol.">
        <title>Complete genome sequence of Yersinia pestis strains Antiqua and Nepal516: evidence of gene reduction in an emerging pathogen.</title>
        <authorList>
            <person name="Chain P.S.G."/>
            <person name="Hu P."/>
            <person name="Malfatti S.A."/>
            <person name="Radnedge L."/>
            <person name="Larimer F."/>
            <person name="Vergez L.M."/>
            <person name="Worsham P."/>
            <person name="Chu M.C."/>
            <person name="Andersen G.L."/>
        </authorList>
    </citation>
    <scope>NUCLEOTIDE SEQUENCE [LARGE SCALE GENOMIC DNA]</scope>
    <source>
        <strain>Nepal516</strain>
    </source>
</reference>
<reference key="2">
    <citation type="submission" date="2009-04" db="EMBL/GenBank/DDBJ databases">
        <title>Yersinia pestis Nepal516A whole genome shotgun sequencing project.</title>
        <authorList>
            <person name="Plunkett G. III"/>
            <person name="Anderson B.D."/>
            <person name="Baumler D.J."/>
            <person name="Burland V."/>
            <person name="Cabot E.L."/>
            <person name="Glasner J.D."/>
            <person name="Mau B."/>
            <person name="Neeno-Eckwall E."/>
            <person name="Perna N.T."/>
            <person name="Munk A.C."/>
            <person name="Tapia R."/>
            <person name="Green L.D."/>
            <person name="Rogers Y.C."/>
            <person name="Detter J.C."/>
            <person name="Bruce D.C."/>
            <person name="Brettin T.S."/>
        </authorList>
    </citation>
    <scope>NUCLEOTIDE SEQUENCE [LARGE SCALE GENOMIC DNA]</scope>
    <source>
        <strain>Nepal516</strain>
    </source>
</reference>
<protein>
    <recommendedName>
        <fullName evidence="1">ATP-dependent Clp protease adapter protein ClpS</fullName>
    </recommendedName>
</protein>
<sequence length="106" mass="12305">MGKNNDWLNFEHLVKDKQIEALQPPSMYKVILNNDDYTPMEFVIDVLQKFFSYDIERATQLMLNVHYQGKAICGVFTAEVAETKVAHVNQYARENEHPLLCTLEKA</sequence>
<feature type="chain" id="PRO_0000300736" description="ATP-dependent Clp protease adapter protein ClpS">
    <location>
        <begin position="1"/>
        <end position="106"/>
    </location>
</feature>
<organism>
    <name type="scientific">Yersinia pestis bv. Antiqua (strain Nepal516)</name>
    <dbReference type="NCBI Taxonomy" id="377628"/>
    <lineage>
        <taxon>Bacteria</taxon>
        <taxon>Pseudomonadati</taxon>
        <taxon>Pseudomonadota</taxon>
        <taxon>Gammaproteobacteria</taxon>
        <taxon>Enterobacterales</taxon>
        <taxon>Yersiniaceae</taxon>
        <taxon>Yersinia</taxon>
    </lineage>
</organism>